<evidence type="ECO:0000255" key="1"/>
<evidence type="ECO:0000269" key="2">
    <source>
    </source>
</evidence>
<evidence type="ECO:0000269" key="3">
    <source>
    </source>
</evidence>
<evidence type="ECO:0000269" key="4">
    <source>
    </source>
</evidence>
<evidence type="ECO:0000269" key="5">
    <source>
    </source>
</evidence>
<evidence type="ECO:0000303" key="6">
    <source>
    </source>
</evidence>
<evidence type="ECO:0000305" key="7"/>
<reference key="1">
    <citation type="submission" date="1997-01" db="EMBL/GenBank/DDBJ databases">
        <title>Sequence of minutes 4-25 of Escherichia coli.</title>
        <authorList>
            <person name="Chung E."/>
            <person name="Allen E."/>
            <person name="Araujo R."/>
            <person name="Aparicio A.M."/>
            <person name="Davis K."/>
            <person name="Duncan M."/>
            <person name="Federspiel N."/>
            <person name="Hyman R."/>
            <person name="Kalman S."/>
            <person name="Komp C."/>
            <person name="Kurdi O."/>
            <person name="Lew H."/>
            <person name="Lin D."/>
            <person name="Namath A."/>
            <person name="Oefner P."/>
            <person name="Roberts D."/>
            <person name="Schramm S."/>
            <person name="Davis R.W."/>
        </authorList>
    </citation>
    <scope>NUCLEOTIDE SEQUENCE [LARGE SCALE GENOMIC DNA]</scope>
    <source>
        <strain>K12 / MG1655 / ATCC 47076</strain>
    </source>
</reference>
<reference key="2">
    <citation type="journal article" date="1997" name="Science">
        <title>The complete genome sequence of Escherichia coli K-12.</title>
        <authorList>
            <person name="Blattner F.R."/>
            <person name="Plunkett G. III"/>
            <person name="Bloch C.A."/>
            <person name="Perna N.T."/>
            <person name="Burland V."/>
            <person name="Riley M."/>
            <person name="Collado-Vides J."/>
            <person name="Glasner J.D."/>
            <person name="Rode C.K."/>
            <person name="Mayhew G.F."/>
            <person name="Gregor J."/>
            <person name="Davis N.W."/>
            <person name="Kirkpatrick H.A."/>
            <person name="Goeden M.A."/>
            <person name="Rose D.J."/>
            <person name="Mau B."/>
            <person name="Shao Y."/>
        </authorList>
    </citation>
    <scope>NUCLEOTIDE SEQUENCE [LARGE SCALE GENOMIC DNA]</scope>
    <source>
        <strain>K12 / MG1655 / ATCC 47076</strain>
    </source>
</reference>
<reference key="3">
    <citation type="journal article" date="2006" name="Mol. Syst. Biol.">
        <title>Highly accurate genome sequences of Escherichia coli K-12 strains MG1655 and W3110.</title>
        <authorList>
            <person name="Hayashi K."/>
            <person name="Morooka N."/>
            <person name="Yamamoto Y."/>
            <person name="Fujita K."/>
            <person name="Isono K."/>
            <person name="Choi S."/>
            <person name="Ohtsubo E."/>
            <person name="Baba T."/>
            <person name="Wanner B.L."/>
            <person name="Mori H."/>
            <person name="Horiuchi T."/>
        </authorList>
    </citation>
    <scope>NUCLEOTIDE SEQUENCE [LARGE SCALE GENOMIC DNA]</scope>
    <source>
        <strain>K12 / W3110 / ATCC 27325 / DSM 5911</strain>
    </source>
</reference>
<reference key="4">
    <citation type="journal article" date="1986" name="J. Mol. Biol.">
        <title>Nucleotide sequence of the phoR gene, a regulatory gene for the phosphate regulon of Escherichia coli.</title>
        <authorList>
            <person name="Makino K."/>
            <person name="Shinagawa H."/>
            <person name="Amemura M."/>
            <person name="Nakata A."/>
        </authorList>
    </citation>
    <scope>NUCLEOTIDE SEQUENCE [GENOMIC DNA] OF 1-70</scope>
    <source>
        <strain>K12</strain>
    </source>
</reference>
<reference key="5">
    <citation type="journal article" date="1971" name="J. Bacteriol.">
        <title>Escherichia coli K-12 mutants altered in the transport of branched-chain amino acids.</title>
        <authorList>
            <person name="Guardiola J."/>
            <person name="Iaccarino M."/>
        </authorList>
    </citation>
    <scope>FUNCTION</scope>
</reference>
<reference key="6">
    <citation type="journal article" date="1974" name="J. Bacteriol.">
        <title>Mutations affecting the different transport systems for isoleucine, leucine, and valine in Escherichia coli K-12.</title>
        <authorList>
            <person name="Guardiola J."/>
            <person name="De Felice M."/>
            <person name="Klopotowski T."/>
            <person name="Iaccarino M."/>
        </authorList>
    </citation>
    <scope>FUNCTION</scope>
</reference>
<reference key="7">
    <citation type="journal article" date="1994" name="Nucleic Acids Res.">
        <title>Intrinsic and extrinsic approaches for detecting genes in a bacterial genome.</title>
        <authorList>
            <person name="Borodovsky M."/>
            <person name="Rudd K.E."/>
            <person name="Koonin E.V."/>
        </authorList>
    </citation>
    <scope>IDENTIFICATION</scope>
</reference>
<reference key="8">
    <citation type="journal article" date="2005" name="Science">
        <title>Global topology analysis of the Escherichia coli inner membrane proteome.</title>
        <authorList>
            <person name="Daley D.O."/>
            <person name="Rapp M."/>
            <person name="Granseth E."/>
            <person name="Melen K."/>
            <person name="Drew D."/>
            <person name="von Heijne G."/>
        </authorList>
    </citation>
    <scope>TOPOLOGY [LARGE SCALE ANALYSIS]</scope>
    <scope>SUBCELLULAR LOCATION</scope>
    <source>
        <strain>K12 / MG1655 / ATCC 47076</strain>
    </source>
</reference>
<reference key="9">
    <citation type="journal article" date="2023" name="Front. Microbiol.">
        <title>A study on L-threonine and L-serine uptake in Escherichia coli K-12.</title>
        <authorList>
            <person name="Khozov A.A."/>
            <person name="Bubnov D.M."/>
            <person name="Plisov E.D."/>
            <person name="Vybornaya T.V."/>
            <person name="Yuzbashev T.V."/>
            <person name="Agrimi G."/>
            <person name="Messina E."/>
            <person name="Stepanova A.A."/>
            <person name="Kudina M.D."/>
            <person name="Alekseeva N.V."/>
            <person name="Netrusov A.I."/>
            <person name="Sineoky S.P."/>
        </authorList>
    </citation>
    <scope>FUNCTION AS A THREONINE TRANSPORTER</scope>
    <source>
        <strain>K12</strain>
    </source>
</reference>
<comment type="function">
    <text evidence="3 4 5">Liv-II branched chain amino acid transport system, which transports leucine, valine and isoleucine (PubMed:4590465, PubMed:4945181). Also acts as a low-affinity threonine transporter (PubMed:37025642). This activity has probably minor relevance for normal cellular physiology, but BrnQ may form the main entry point when the threonine concentration in the external environment reaches a toxic level (PubMed:37025642).</text>
</comment>
<comment type="interaction">
    <interactant intactId="EBI-555687">
        <id>P0AD99</id>
    </interactant>
    <interactant intactId="EBI-555676">
        <id>P08312</id>
        <label>pheS</label>
    </interactant>
    <organismsDiffer>false</organismsDiffer>
    <experiments>5</experiments>
</comment>
<comment type="subcellular location">
    <subcellularLocation>
        <location evidence="2">Cell inner membrane</location>
        <topology evidence="1">Multi-pass membrane protein</topology>
    </subcellularLocation>
</comment>
<comment type="similarity">
    <text evidence="7">Belongs to the branched chain amino acid transporter family.</text>
</comment>
<protein>
    <recommendedName>
        <fullName evidence="7">Branched-chain amino acid permease BrnQ</fullName>
        <shortName evidence="7">BCAA permease</shortName>
    </recommendedName>
    <alternativeName>
        <fullName>Branched-chain amino acid transport system 2 carrier protein</fullName>
    </alternativeName>
    <alternativeName>
        <fullName>LIV-II</fullName>
    </alternativeName>
</protein>
<proteinExistence type="evidence at protein level"/>
<accession>P0AD99</accession>
<accession>P37011</accession>
<accession>P77112</accession>
<accession>P77492</accession>
<accession>Q2MC25</accession>
<name>BRNQ_ECOLI</name>
<organism>
    <name type="scientific">Escherichia coli (strain K12)</name>
    <dbReference type="NCBI Taxonomy" id="83333"/>
    <lineage>
        <taxon>Bacteria</taxon>
        <taxon>Pseudomonadati</taxon>
        <taxon>Pseudomonadota</taxon>
        <taxon>Gammaproteobacteria</taxon>
        <taxon>Enterobacterales</taxon>
        <taxon>Enterobacteriaceae</taxon>
        <taxon>Escherichia</taxon>
    </lineage>
</organism>
<keyword id="KW-0029">Amino-acid transport</keyword>
<keyword id="KW-0997">Cell inner membrane</keyword>
<keyword id="KW-1003">Cell membrane</keyword>
<keyword id="KW-0472">Membrane</keyword>
<keyword id="KW-1185">Reference proteome</keyword>
<keyword id="KW-0812">Transmembrane</keyword>
<keyword id="KW-1133">Transmembrane helix</keyword>
<keyword id="KW-0813">Transport</keyword>
<dbReference type="EMBL" id="U73857">
    <property type="protein sequence ID" value="AAB18125.1"/>
    <property type="molecule type" value="Genomic_DNA"/>
</dbReference>
<dbReference type="EMBL" id="U82664">
    <property type="protein sequence ID" value="AAB40157.1"/>
    <property type="molecule type" value="Genomic_DNA"/>
</dbReference>
<dbReference type="EMBL" id="U00096">
    <property type="protein sequence ID" value="AAC73504.1"/>
    <property type="molecule type" value="Genomic_DNA"/>
</dbReference>
<dbReference type="EMBL" id="AP009048">
    <property type="protein sequence ID" value="BAE76181.1"/>
    <property type="molecule type" value="Genomic_DNA"/>
</dbReference>
<dbReference type="EMBL" id="X04704">
    <property type="status" value="NOT_ANNOTATED_CDS"/>
    <property type="molecule type" value="Genomic_DNA"/>
</dbReference>
<dbReference type="PIR" id="A64769">
    <property type="entry name" value="A64769"/>
</dbReference>
<dbReference type="RefSeq" id="NP_414935.1">
    <property type="nucleotide sequence ID" value="NC_000913.3"/>
</dbReference>
<dbReference type="RefSeq" id="WP_000149639.1">
    <property type="nucleotide sequence ID" value="NZ_SSZK01000009.1"/>
</dbReference>
<dbReference type="BioGRID" id="4259819">
    <property type="interactions" value="39"/>
</dbReference>
<dbReference type="BioGRID" id="849431">
    <property type="interactions" value="1"/>
</dbReference>
<dbReference type="DIP" id="DIP-48078N"/>
<dbReference type="FunCoup" id="P0AD99">
    <property type="interactions" value="58"/>
</dbReference>
<dbReference type="IntAct" id="P0AD99">
    <property type="interactions" value="1"/>
</dbReference>
<dbReference type="STRING" id="511145.b0401"/>
<dbReference type="TCDB" id="2.A.26.1.10">
    <property type="family name" value="the branched chain amino acid:cation symporter (livcs) family"/>
</dbReference>
<dbReference type="PaxDb" id="511145-b0401"/>
<dbReference type="EnsemblBacteria" id="AAC73504">
    <property type="protein sequence ID" value="AAC73504"/>
    <property type="gene ID" value="b0401"/>
</dbReference>
<dbReference type="GeneID" id="93777059"/>
<dbReference type="GeneID" id="945042"/>
<dbReference type="KEGG" id="ecj:JW0391"/>
<dbReference type="KEGG" id="eco:b0401"/>
<dbReference type="KEGG" id="ecoc:C3026_01950"/>
<dbReference type="PATRIC" id="fig|1411691.4.peg.1876"/>
<dbReference type="EchoBASE" id="EB2087"/>
<dbReference type="eggNOG" id="COG1114">
    <property type="taxonomic scope" value="Bacteria"/>
</dbReference>
<dbReference type="HOGENOM" id="CLU_036807_0_0_6"/>
<dbReference type="InParanoid" id="P0AD99"/>
<dbReference type="OMA" id="IWPAGPI"/>
<dbReference type="OrthoDB" id="9783920at2"/>
<dbReference type="PhylomeDB" id="P0AD99"/>
<dbReference type="BioCyc" id="EcoCyc:BRNQ-MONOMER"/>
<dbReference type="BioCyc" id="MetaCyc:BRNQ-MONOMER"/>
<dbReference type="PRO" id="PR:P0AD99"/>
<dbReference type="Proteomes" id="UP000000625">
    <property type="component" value="Chromosome"/>
</dbReference>
<dbReference type="GO" id="GO:0005886">
    <property type="term" value="C:plasma membrane"/>
    <property type="evidence" value="ECO:0000314"/>
    <property type="project" value="EcoCyc"/>
</dbReference>
<dbReference type="GO" id="GO:0015188">
    <property type="term" value="F:L-isoleucine transmembrane transporter activity"/>
    <property type="evidence" value="ECO:0000315"/>
    <property type="project" value="EcoCyc"/>
</dbReference>
<dbReference type="GO" id="GO:0015190">
    <property type="term" value="F:L-leucine transmembrane transporter activity"/>
    <property type="evidence" value="ECO:0000315"/>
    <property type="project" value="EcoCyc"/>
</dbReference>
<dbReference type="GO" id="GO:0005304">
    <property type="term" value="F:L-valine transmembrane transporter activity"/>
    <property type="evidence" value="ECO:0000315"/>
    <property type="project" value="EcoCyc"/>
</dbReference>
<dbReference type="GO" id="GO:0015803">
    <property type="term" value="P:branched-chain amino acid transport"/>
    <property type="evidence" value="ECO:0000315"/>
    <property type="project" value="EcoliWiki"/>
</dbReference>
<dbReference type="GO" id="GO:0015818">
    <property type="term" value="P:isoleucine transport"/>
    <property type="evidence" value="ECO:0000315"/>
    <property type="project" value="EcoliWiki"/>
</dbReference>
<dbReference type="GO" id="GO:0015820">
    <property type="term" value="P:L-leucine transport"/>
    <property type="evidence" value="ECO:0000315"/>
    <property type="project" value="EcoliWiki"/>
</dbReference>
<dbReference type="GO" id="GO:0015829">
    <property type="term" value="P:valine transport"/>
    <property type="evidence" value="ECO:0000315"/>
    <property type="project" value="EcoliWiki"/>
</dbReference>
<dbReference type="InterPro" id="IPR004685">
    <property type="entry name" value="Brnchd-chn_aa_trnsp_Livcs"/>
</dbReference>
<dbReference type="NCBIfam" id="TIGR00796">
    <property type="entry name" value="livcs"/>
    <property type="match status" value="1"/>
</dbReference>
<dbReference type="NCBIfam" id="NF011962">
    <property type="entry name" value="PRK15433.1"/>
    <property type="match status" value="1"/>
</dbReference>
<dbReference type="PANTHER" id="PTHR30588:SF0">
    <property type="entry name" value="BRANCHED-CHAIN AMINO ACID PERMEASE BRNQ"/>
    <property type="match status" value="1"/>
</dbReference>
<dbReference type="PANTHER" id="PTHR30588">
    <property type="entry name" value="BRANCHED-CHAIN AMINO ACID TRANSPORT SYSTEM 2 CARRIER PROTEIN"/>
    <property type="match status" value="1"/>
</dbReference>
<dbReference type="Pfam" id="PF05525">
    <property type="entry name" value="Branch_AA_trans"/>
    <property type="match status" value="1"/>
</dbReference>
<sequence length="439" mass="46209">MTHQLRSRDIIALGFMTFALFVGAGNIIFPPMVGLQAGEHVWTAAFGFLITAVGLPVLTVVALAKVGGGVDSLSTPIGKVAGVLLATVCYLAVGPLFATPRTATVSFEVGIAPLTGDSALPLFIYSLVYFAIVILVSLYPGKLLDTVGNFLAPLKIIALVILSVAAIVWPAGSISTATEAYQNAAFSNGFVNGYLTMDTLGAMVFGIVIVNAARSRGVTEARLLTRYTVWAGLMAGVGLTLLYLALFRLGSDSASLVDQSANGAAILHAYVQHTFGGGGSFLLAALIFIACLVTAVGLTCACAEFFAQYVPLSYRTLVFILGGFSMVVSNLGLSQLIQISVPVLTAIYPPCIALVVLSFTRSWWHNSSRVIAPPMFISLLFGILDGIKASAFSDILPSWAQRLPLAEQGLAWLMPTVVMVVLAIIWDRAAGRQVTSSAH</sequence>
<feature type="chain" id="PRO_0000099765" description="Branched-chain amino acid permease BrnQ">
    <location>
        <begin position="1"/>
        <end position="439"/>
    </location>
</feature>
<feature type="topological domain" description="Cytoplasmic" evidence="7">
    <location>
        <begin position="1"/>
        <end position="9"/>
    </location>
</feature>
<feature type="transmembrane region" description="Helical" evidence="1">
    <location>
        <begin position="10"/>
        <end position="30"/>
    </location>
</feature>
<feature type="topological domain" description="Periplasmic" evidence="7">
    <location>
        <begin position="31"/>
        <end position="45"/>
    </location>
</feature>
<feature type="transmembrane region" description="Helical" evidence="1">
    <location>
        <begin position="46"/>
        <end position="66"/>
    </location>
</feature>
<feature type="topological domain" description="Cytoplasmic" evidence="7">
    <location>
        <begin position="67"/>
        <end position="79"/>
    </location>
</feature>
<feature type="transmembrane region" description="Helical" evidence="1">
    <location>
        <begin position="80"/>
        <end position="100"/>
    </location>
</feature>
<feature type="topological domain" description="Periplasmic" evidence="7">
    <location>
        <begin position="101"/>
        <end position="118"/>
    </location>
</feature>
<feature type="transmembrane region" description="Helical" evidence="1">
    <location>
        <begin position="119"/>
        <end position="139"/>
    </location>
</feature>
<feature type="topological domain" description="Cytoplasmic" evidence="7">
    <location>
        <begin position="140"/>
        <end position="149"/>
    </location>
</feature>
<feature type="transmembrane region" description="Helical" evidence="1">
    <location>
        <begin position="150"/>
        <end position="170"/>
    </location>
</feature>
<feature type="topological domain" description="Periplasmic" evidence="7">
    <location>
        <begin position="171"/>
        <end position="189"/>
    </location>
</feature>
<feature type="transmembrane region" description="Helical" evidence="1">
    <location>
        <begin position="190"/>
        <end position="210"/>
    </location>
</feature>
<feature type="topological domain" description="Cytoplasmic" evidence="7">
    <location>
        <begin position="211"/>
        <end position="226"/>
    </location>
</feature>
<feature type="transmembrane region" description="Helical" evidence="1">
    <location>
        <begin position="227"/>
        <end position="247"/>
    </location>
</feature>
<feature type="topological domain" description="Periplasmic" evidence="7">
    <location>
        <begin position="248"/>
        <end position="277"/>
    </location>
</feature>
<feature type="transmembrane region" description="Helical" evidence="1">
    <location>
        <begin position="278"/>
        <end position="298"/>
    </location>
</feature>
<feature type="topological domain" description="Cytoplasmic" evidence="7">
    <location>
        <begin position="299"/>
        <end position="316"/>
    </location>
</feature>
<feature type="transmembrane region" description="Helical" evidence="1">
    <location>
        <begin position="317"/>
        <end position="337"/>
    </location>
</feature>
<feature type="topological domain" description="Periplasmic" evidence="7">
    <location>
        <position position="338"/>
    </location>
</feature>
<feature type="transmembrane region" description="Helical" evidence="1">
    <location>
        <begin position="339"/>
        <end position="359"/>
    </location>
</feature>
<feature type="topological domain" description="Cytoplasmic" evidence="7">
    <location>
        <begin position="360"/>
        <end position="369"/>
    </location>
</feature>
<feature type="transmembrane region" description="Helical" evidence="1">
    <location>
        <begin position="370"/>
        <end position="390"/>
    </location>
</feature>
<feature type="topological domain" description="Periplasmic" evidence="7">
    <location>
        <begin position="391"/>
        <end position="404"/>
    </location>
</feature>
<feature type="transmembrane region" description="Helical" evidence="1">
    <location>
        <begin position="405"/>
        <end position="425"/>
    </location>
</feature>
<feature type="topological domain" description="Cytoplasmic" evidence="2">
    <location>
        <begin position="426"/>
        <end position="439"/>
    </location>
</feature>
<gene>
    <name evidence="6" type="primary">brnQ</name>
    <name type="ordered locus">b0401</name>
    <name type="ordered locus">JW0391</name>
</gene>